<reference key="1">
    <citation type="submission" date="2007-03" db="EMBL/GenBank/DDBJ databases">
        <authorList>
            <consortium name="NIH - Xenopus Gene Collection (XGC) project"/>
        </authorList>
    </citation>
    <scope>NUCLEOTIDE SEQUENCE [LARGE SCALE MRNA]</scope>
    <source>
        <tissue>Brain</tissue>
        <tissue>Embryo</tissue>
    </source>
</reference>
<accession>Q0V9X5</accession>
<accession>A4IGY1</accession>
<proteinExistence type="evidence at transcript level"/>
<name>BHE22_XENTR</name>
<dbReference type="EMBL" id="BC121359">
    <property type="protein sequence ID" value="AAI21360.1"/>
    <property type="molecule type" value="mRNA"/>
</dbReference>
<dbReference type="EMBL" id="BC135293">
    <property type="protein sequence ID" value="AAI35294.1"/>
    <property type="molecule type" value="mRNA"/>
</dbReference>
<dbReference type="RefSeq" id="NP_001072933.1">
    <property type="nucleotide sequence ID" value="NM_001079465.1"/>
</dbReference>
<dbReference type="SMR" id="Q0V9X5"/>
<dbReference type="FunCoup" id="Q0V9X5">
    <property type="interactions" value="687"/>
</dbReference>
<dbReference type="STRING" id="8364.ENSXETP00000051358"/>
<dbReference type="DNASU" id="780395"/>
<dbReference type="GeneID" id="780395"/>
<dbReference type="KEGG" id="xtr:780395"/>
<dbReference type="AGR" id="Xenbase:XB-GENE-6457792"/>
<dbReference type="CTD" id="27319"/>
<dbReference type="Xenbase" id="XB-GENE-6457792">
    <property type="gene designation" value="bhlhe22"/>
</dbReference>
<dbReference type="InParanoid" id="Q0V9X5"/>
<dbReference type="OMA" id="DDRCEMM"/>
<dbReference type="OrthoDB" id="10011855at2759"/>
<dbReference type="Proteomes" id="UP000008143">
    <property type="component" value="Chromosome 6"/>
</dbReference>
<dbReference type="Bgee" id="ENSXETG00000039790">
    <property type="expression patterns" value="Expressed in brain and 2 other cell types or tissues"/>
</dbReference>
<dbReference type="GO" id="GO:0005634">
    <property type="term" value="C:nucleus"/>
    <property type="evidence" value="ECO:0007669"/>
    <property type="project" value="UniProtKB-SubCell"/>
</dbReference>
<dbReference type="GO" id="GO:0046983">
    <property type="term" value="F:protein dimerization activity"/>
    <property type="evidence" value="ECO:0007669"/>
    <property type="project" value="InterPro"/>
</dbReference>
<dbReference type="CDD" id="cd18954">
    <property type="entry name" value="bHLH_TS_bHLHe22_bHLHb5"/>
    <property type="match status" value="1"/>
</dbReference>
<dbReference type="FunFam" id="4.10.280.10:FF:000026">
    <property type="entry name" value="Basic helix-loop-helix family, member e23"/>
    <property type="match status" value="1"/>
</dbReference>
<dbReference type="Gene3D" id="4.10.280.10">
    <property type="entry name" value="Helix-loop-helix DNA-binding domain"/>
    <property type="match status" value="1"/>
</dbReference>
<dbReference type="InterPro" id="IPR011598">
    <property type="entry name" value="bHLH_dom"/>
</dbReference>
<dbReference type="InterPro" id="IPR050359">
    <property type="entry name" value="bHLH_transcription_factors"/>
</dbReference>
<dbReference type="InterPro" id="IPR036638">
    <property type="entry name" value="HLH_DNA-bd_sf"/>
</dbReference>
<dbReference type="PANTHER" id="PTHR19290">
    <property type="entry name" value="BASIC HELIX-LOOP-HELIX PROTEIN NEUROGENIN-RELATED"/>
    <property type="match status" value="1"/>
</dbReference>
<dbReference type="PANTHER" id="PTHR19290:SF52">
    <property type="entry name" value="CLASS E BASIC HELIX-LOOP-HELIX PROTEIN 22"/>
    <property type="match status" value="1"/>
</dbReference>
<dbReference type="Pfam" id="PF00010">
    <property type="entry name" value="HLH"/>
    <property type="match status" value="1"/>
</dbReference>
<dbReference type="SMART" id="SM00353">
    <property type="entry name" value="HLH"/>
    <property type="match status" value="1"/>
</dbReference>
<dbReference type="SUPFAM" id="SSF47459">
    <property type="entry name" value="HLH, helix-loop-helix DNA-binding domain"/>
    <property type="match status" value="1"/>
</dbReference>
<dbReference type="PROSITE" id="PS50888">
    <property type="entry name" value="BHLH"/>
    <property type="match status" value="1"/>
</dbReference>
<comment type="function">
    <text evidence="1">May act as a transcriptional repressor.</text>
</comment>
<comment type="subcellular location">
    <subcellularLocation>
        <location evidence="4">Nucleus</location>
    </subcellularLocation>
</comment>
<keyword id="KW-0539">Nucleus</keyword>
<keyword id="KW-1185">Reference proteome</keyword>
<keyword id="KW-0678">Repressor</keyword>
<keyword id="KW-0804">Transcription</keyword>
<keyword id="KW-0805">Transcription regulation</keyword>
<protein>
    <recommendedName>
        <fullName>Class E basic helix-loop-helix protein 22</fullName>
        <shortName>bHLHe22</shortName>
    </recommendedName>
    <alternativeName>
        <fullName>Class B basic helix-loop-helix protein 5</fullName>
        <shortName>bHLHb5</shortName>
    </alternativeName>
</protein>
<organism>
    <name type="scientific">Xenopus tropicalis</name>
    <name type="common">Western clawed frog</name>
    <name type="synonym">Silurana tropicalis</name>
    <dbReference type="NCBI Taxonomy" id="8364"/>
    <lineage>
        <taxon>Eukaryota</taxon>
        <taxon>Metazoa</taxon>
        <taxon>Chordata</taxon>
        <taxon>Craniata</taxon>
        <taxon>Vertebrata</taxon>
        <taxon>Euteleostomi</taxon>
        <taxon>Amphibia</taxon>
        <taxon>Batrachia</taxon>
        <taxon>Anura</taxon>
        <taxon>Pipoidea</taxon>
        <taxon>Pipidae</taxon>
        <taxon>Xenopodinae</taxon>
        <taxon>Xenopus</taxon>
        <taxon>Silurana</taxon>
    </lineage>
</organism>
<evidence type="ECO:0000250" key="1"/>
<evidence type="ECO:0000255" key="2">
    <source>
        <dbReference type="PROSITE-ProRule" id="PRU00981"/>
    </source>
</evidence>
<evidence type="ECO:0000256" key="3">
    <source>
        <dbReference type="SAM" id="MobiDB-lite"/>
    </source>
</evidence>
<evidence type="ECO:0000305" key="4"/>
<sequence length="296" mass="31322">MERALNLAEEDLFHKSLSASAKRMESAFRPPQGLDLSQPGDRSPLHCYDGPDPSDLLRHHQHHHQASSGALGAAGANEALALAAANMCAKFGESAGRVSVAESSGGEEQSPDDDSDGRCELVLRSAEHRAQAGLKVDAPCATGGGKKSKEQRTLRLNINARERRRMHDLNDALDELRAVIPYAHSPSVRKLSKIATLLLAKNYILMQAQALEEMRRLVAYLNQGQAISAASIPNPAAAAAAAAAVALHPALGAYEPAAAVGYPFSTGLPTATSCPDKCALFNNISSSLCKQCTDKP</sequence>
<feature type="chain" id="PRO_0000274288" description="Class E basic helix-loop-helix protein 22">
    <location>
        <begin position="1"/>
        <end position="296"/>
    </location>
</feature>
<feature type="domain" description="bHLH" evidence="2">
    <location>
        <begin position="153"/>
        <end position="207"/>
    </location>
</feature>
<feature type="region of interest" description="Disordered" evidence="3">
    <location>
        <begin position="26"/>
        <end position="70"/>
    </location>
</feature>
<gene>
    <name type="primary">bhlhe22</name>
    <name type="synonym">bhlhb5</name>
</gene>